<organism>
    <name type="scientific">Tolumonas auensis (strain DSM 9187 / NBRC 110442 / TA 4)</name>
    <dbReference type="NCBI Taxonomy" id="595494"/>
    <lineage>
        <taxon>Bacteria</taxon>
        <taxon>Pseudomonadati</taxon>
        <taxon>Pseudomonadota</taxon>
        <taxon>Gammaproteobacteria</taxon>
        <taxon>Aeromonadales</taxon>
        <taxon>Aeromonadaceae</taxon>
        <taxon>Tolumonas</taxon>
    </lineage>
</organism>
<gene>
    <name evidence="1" type="primary">aroC</name>
    <name type="ordered locus">Tola_2179</name>
</gene>
<keyword id="KW-0028">Amino-acid biosynthesis</keyword>
<keyword id="KW-0057">Aromatic amino acid biosynthesis</keyword>
<keyword id="KW-0274">FAD</keyword>
<keyword id="KW-0285">Flavoprotein</keyword>
<keyword id="KW-0288">FMN</keyword>
<keyword id="KW-0456">Lyase</keyword>
<keyword id="KW-0521">NADP</keyword>
<keyword id="KW-1185">Reference proteome</keyword>
<reference key="1">
    <citation type="submission" date="2009-05" db="EMBL/GenBank/DDBJ databases">
        <title>Complete sequence of Tolumonas auensis DSM 9187.</title>
        <authorList>
            <consortium name="US DOE Joint Genome Institute"/>
            <person name="Lucas S."/>
            <person name="Copeland A."/>
            <person name="Lapidus A."/>
            <person name="Glavina del Rio T."/>
            <person name="Tice H."/>
            <person name="Bruce D."/>
            <person name="Goodwin L."/>
            <person name="Pitluck S."/>
            <person name="Chertkov O."/>
            <person name="Brettin T."/>
            <person name="Detter J.C."/>
            <person name="Han C."/>
            <person name="Larimer F."/>
            <person name="Land M."/>
            <person name="Hauser L."/>
            <person name="Kyrpides N."/>
            <person name="Mikhailova N."/>
            <person name="Spring S."/>
            <person name="Beller H."/>
        </authorList>
    </citation>
    <scope>NUCLEOTIDE SEQUENCE [LARGE SCALE GENOMIC DNA]</scope>
    <source>
        <strain>DSM 9187 / NBRC 110442 / TA 4</strain>
    </source>
</reference>
<evidence type="ECO:0000255" key="1">
    <source>
        <dbReference type="HAMAP-Rule" id="MF_00300"/>
    </source>
</evidence>
<dbReference type="EC" id="4.2.3.5" evidence="1"/>
<dbReference type="EMBL" id="CP001616">
    <property type="protein sequence ID" value="ACQ93778.1"/>
    <property type="molecule type" value="Genomic_DNA"/>
</dbReference>
<dbReference type="RefSeq" id="WP_015879246.1">
    <property type="nucleotide sequence ID" value="NC_012691.1"/>
</dbReference>
<dbReference type="SMR" id="C4L8D2"/>
<dbReference type="STRING" id="595494.Tola_2179"/>
<dbReference type="KEGG" id="tau:Tola_2179"/>
<dbReference type="eggNOG" id="COG0082">
    <property type="taxonomic scope" value="Bacteria"/>
</dbReference>
<dbReference type="HOGENOM" id="CLU_034547_0_2_6"/>
<dbReference type="OrthoDB" id="9771806at2"/>
<dbReference type="UniPathway" id="UPA00053">
    <property type="reaction ID" value="UER00090"/>
</dbReference>
<dbReference type="Proteomes" id="UP000009073">
    <property type="component" value="Chromosome"/>
</dbReference>
<dbReference type="GO" id="GO:0005829">
    <property type="term" value="C:cytosol"/>
    <property type="evidence" value="ECO:0007669"/>
    <property type="project" value="TreeGrafter"/>
</dbReference>
<dbReference type="GO" id="GO:0004107">
    <property type="term" value="F:chorismate synthase activity"/>
    <property type="evidence" value="ECO:0007669"/>
    <property type="project" value="UniProtKB-UniRule"/>
</dbReference>
<dbReference type="GO" id="GO:0010181">
    <property type="term" value="F:FMN binding"/>
    <property type="evidence" value="ECO:0007669"/>
    <property type="project" value="TreeGrafter"/>
</dbReference>
<dbReference type="GO" id="GO:0008652">
    <property type="term" value="P:amino acid biosynthetic process"/>
    <property type="evidence" value="ECO:0007669"/>
    <property type="project" value="UniProtKB-KW"/>
</dbReference>
<dbReference type="GO" id="GO:0009073">
    <property type="term" value="P:aromatic amino acid family biosynthetic process"/>
    <property type="evidence" value="ECO:0007669"/>
    <property type="project" value="UniProtKB-KW"/>
</dbReference>
<dbReference type="GO" id="GO:0009423">
    <property type="term" value="P:chorismate biosynthetic process"/>
    <property type="evidence" value="ECO:0007669"/>
    <property type="project" value="UniProtKB-UniRule"/>
</dbReference>
<dbReference type="CDD" id="cd07304">
    <property type="entry name" value="Chorismate_synthase"/>
    <property type="match status" value="1"/>
</dbReference>
<dbReference type="FunFam" id="3.60.150.10:FF:000001">
    <property type="entry name" value="Chorismate synthase"/>
    <property type="match status" value="1"/>
</dbReference>
<dbReference type="Gene3D" id="3.60.150.10">
    <property type="entry name" value="Chorismate synthase AroC"/>
    <property type="match status" value="1"/>
</dbReference>
<dbReference type="HAMAP" id="MF_00300">
    <property type="entry name" value="Chorismate_synth"/>
    <property type="match status" value="1"/>
</dbReference>
<dbReference type="InterPro" id="IPR000453">
    <property type="entry name" value="Chorismate_synth"/>
</dbReference>
<dbReference type="InterPro" id="IPR035904">
    <property type="entry name" value="Chorismate_synth_AroC_sf"/>
</dbReference>
<dbReference type="InterPro" id="IPR020541">
    <property type="entry name" value="Chorismate_synthase_CS"/>
</dbReference>
<dbReference type="NCBIfam" id="TIGR00033">
    <property type="entry name" value="aroC"/>
    <property type="match status" value="1"/>
</dbReference>
<dbReference type="NCBIfam" id="NF003793">
    <property type="entry name" value="PRK05382.1"/>
    <property type="match status" value="1"/>
</dbReference>
<dbReference type="PANTHER" id="PTHR21085">
    <property type="entry name" value="CHORISMATE SYNTHASE"/>
    <property type="match status" value="1"/>
</dbReference>
<dbReference type="PANTHER" id="PTHR21085:SF0">
    <property type="entry name" value="CHORISMATE SYNTHASE"/>
    <property type="match status" value="1"/>
</dbReference>
<dbReference type="Pfam" id="PF01264">
    <property type="entry name" value="Chorismate_synt"/>
    <property type="match status" value="1"/>
</dbReference>
<dbReference type="PIRSF" id="PIRSF001456">
    <property type="entry name" value="Chorismate_synth"/>
    <property type="match status" value="1"/>
</dbReference>
<dbReference type="SUPFAM" id="SSF103263">
    <property type="entry name" value="Chorismate synthase, AroC"/>
    <property type="match status" value="1"/>
</dbReference>
<dbReference type="PROSITE" id="PS00787">
    <property type="entry name" value="CHORISMATE_SYNTHASE_1"/>
    <property type="match status" value="1"/>
</dbReference>
<dbReference type="PROSITE" id="PS00788">
    <property type="entry name" value="CHORISMATE_SYNTHASE_2"/>
    <property type="match status" value="1"/>
</dbReference>
<dbReference type="PROSITE" id="PS00789">
    <property type="entry name" value="CHORISMATE_SYNTHASE_3"/>
    <property type="match status" value="1"/>
</dbReference>
<sequence length="362" mass="39364">MAGNTFGQLFRVTTFGESHGLALGAIVDGCPPGMELTEADLQGDLDRRKPGTSRFTTQRREDDEVKILSGVFEGKTTGTSIGLLIENTDQRSKDYSDIKDLFRPGHADYTYHQKYGIRDYRGGGRSSARETAMRVAAGAIAKKYLKEHCGIEIFGYLEQLGPIKAERFDKSIIENNPFFFADPDKLDELDAYMRDLKKQGDSIGAKLKVIATGVPVGLGEPVFDRLDAEIAHAMMGINAVKGVEVGDGFAVVEQHGSEHRDPMRPDGFLSNHAGGILGGISSGQEIVVGLALKPTSSIMVPGETIDKQGNPAEMVTRGRHDPCVGIRAVPIAEAMLALVLMDHLLRHRAQNFDVVTETPKLK</sequence>
<accession>C4L8D2</accession>
<comment type="function">
    <text evidence="1">Catalyzes the anti-1,4-elimination of the C-3 phosphate and the C-6 proR hydrogen from 5-enolpyruvylshikimate-3-phosphate (EPSP) to yield chorismate, which is the branch point compound that serves as the starting substrate for the three terminal pathways of aromatic amino acid biosynthesis. This reaction introduces a second double bond into the aromatic ring system.</text>
</comment>
<comment type="catalytic activity">
    <reaction evidence="1">
        <text>5-O-(1-carboxyvinyl)-3-phosphoshikimate = chorismate + phosphate</text>
        <dbReference type="Rhea" id="RHEA:21020"/>
        <dbReference type="ChEBI" id="CHEBI:29748"/>
        <dbReference type="ChEBI" id="CHEBI:43474"/>
        <dbReference type="ChEBI" id="CHEBI:57701"/>
        <dbReference type="EC" id="4.2.3.5"/>
    </reaction>
</comment>
<comment type="cofactor">
    <cofactor evidence="1">
        <name>FMNH2</name>
        <dbReference type="ChEBI" id="CHEBI:57618"/>
    </cofactor>
    <text evidence="1">Reduced FMN (FMNH(2)).</text>
</comment>
<comment type="pathway">
    <text evidence="1">Metabolic intermediate biosynthesis; chorismate biosynthesis; chorismate from D-erythrose 4-phosphate and phosphoenolpyruvate: step 7/7.</text>
</comment>
<comment type="subunit">
    <text evidence="1">Homotetramer.</text>
</comment>
<comment type="similarity">
    <text evidence="1">Belongs to the chorismate synthase family.</text>
</comment>
<feature type="chain" id="PRO_1000204967" description="Chorismate synthase">
    <location>
        <begin position="1"/>
        <end position="362"/>
    </location>
</feature>
<feature type="binding site" evidence="1">
    <location>
        <position position="48"/>
    </location>
    <ligand>
        <name>NADP(+)</name>
        <dbReference type="ChEBI" id="CHEBI:58349"/>
    </ligand>
</feature>
<feature type="binding site" evidence="1">
    <location>
        <position position="54"/>
    </location>
    <ligand>
        <name>NADP(+)</name>
        <dbReference type="ChEBI" id="CHEBI:58349"/>
    </ligand>
</feature>
<feature type="binding site" evidence="1">
    <location>
        <begin position="125"/>
        <end position="127"/>
    </location>
    <ligand>
        <name>FMN</name>
        <dbReference type="ChEBI" id="CHEBI:58210"/>
    </ligand>
</feature>
<feature type="binding site" evidence="1">
    <location>
        <begin position="238"/>
        <end position="239"/>
    </location>
    <ligand>
        <name>FMN</name>
        <dbReference type="ChEBI" id="CHEBI:58210"/>
    </ligand>
</feature>
<feature type="binding site" evidence="1">
    <location>
        <position position="278"/>
    </location>
    <ligand>
        <name>FMN</name>
        <dbReference type="ChEBI" id="CHEBI:58210"/>
    </ligand>
</feature>
<feature type="binding site" evidence="1">
    <location>
        <begin position="293"/>
        <end position="297"/>
    </location>
    <ligand>
        <name>FMN</name>
        <dbReference type="ChEBI" id="CHEBI:58210"/>
    </ligand>
</feature>
<feature type="binding site" evidence="1">
    <location>
        <position position="319"/>
    </location>
    <ligand>
        <name>FMN</name>
        <dbReference type="ChEBI" id="CHEBI:58210"/>
    </ligand>
</feature>
<protein>
    <recommendedName>
        <fullName evidence="1">Chorismate synthase</fullName>
        <shortName evidence="1">CS</shortName>
        <ecNumber evidence="1">4.2.3.5</ecNumber>
    </recommendedName>
    <alternativeName>
        <fullName evidence="1">5-enolpyruvylshikimate-3-phosphate phospholyase</fullName>
    </alternativeName>
</protein>
<name>AROC_TOLAT</name>
<proteinExistence type="inferred from homology"/>